<feature type="chain" id="PRO_0000221970" description="Protein VP5">
    <location>
        <begin position="1"/>
        <end position="148"/>
    </location>
</feature>
<organism>
    <name type="scientific">Infectious pancreatic necrosis virus (strain N1)</name>
    <name type="common">IPNV</name>
    <dbReference type="NCBI Taxonomy" id="11004"/>
    <lineage>
        <taxon>Viruses</taxon>
        <taxon>Riboviria</taxon>
        <taxon>Orthornavirae</taxon>
        <taxon>Birnaviridae</taxon>
        <taxon>Aquabirnavirus</taxon>
        <taxon>Aquabirnavirus salmonidae</taxon>
    </lineage>
</organism>
<proteinExistence type="inferred from homology"/>
<reference key="1">
    <citation type="journal article" date="1990" name="J. Gen. Virol.">
        <title>Sequence of the large double-stranded RNA segment of the N1 strain of infectious pancreatic necrosis virus: a comparison with other Birnaviridae.</title>
        <authorList>
            <person name="Havarstein L.S."/>
            <person name="Kalland K.H."/>
            <person name="Christie K.E."/>
            <person name="Endresen C."/>
        </authorList>
    </citation>
    <scope>NUCLEOTIDE SEQUENCE [GENOMIC RNA]</scope>
</reference>
<accession>P22496</accession>
<evidence type="ECO:0000250" key="1"/>
<evidence type="ECO:0000305" key="2"/>
<protein>
    <recommendedName>
        <fullName>Protein VP5</fullName>
    </recommendedName>
</protein>
<name>VP5_IPNVN</name>
<gene>
    <name type="primary">VP5</name>
</gene>
<organismHost>
    <name type="scientific">Oncorhynchus mykiss</name>
    <name type="common">Rainbow trout</name>
    <name type="synonym">Salmo gairdneri</name>
    <dbReference type="NCBI Taxonomy" id="8022"/>
</organismHost>
<organismHost>
    <name type="scientific">Salmo</name>
    <dbReference type="NCBI Taxonomy" id="8028"/>
</organismHost>
<dbReference type="EMBL" id="D00701">
    <property type="protein sequence ID" value="BAA00608.1"/>
    <property type="molecule type" value="Genomic_RNA"/>
</dbReference>
<dbReference type="PIR" id="A34148">
    <property type="entry name" value="VPXSN1"/>
</dbReference>
<dbReference type="InterPro" id="IPR004284">
    <property type="entry name" value="Birna_VP5"/>
</dbReference>
<dbReference type="Pfam" id="PF03042">
    <property type="entry name" value="Birna_VP5"/>
    <property type="match status" value="1"/>
</dbReference>
<comment type="function">
    <text evidence="1">VP5 is not required for viral replication in vivo and its absence does not alter the virulence characteristics of the virus or the establishment of persistent IPNV infection.</text>
</comment>
<comment type="similarity">
    <text evidence="2">Belongs to the avibirnavirus/aquabirnavirus VP5 protein family.</text>
</comment>
<sequence>MAKALSNKQTNNLYSIQDEHKQGNRNLLEIHYASRDWTSKHPGRHNGETHPKTRDLVIQPRGLRIRKWHSCLFPWGTRLTDRCTLQMECEPDGAGVRPVAGDVAGPEESLQLREADLKEIRHPKLHTTGRSLCSERDAQRCHLRRQSV</sequence>